<reference key="1">
    <citation type="submission" date="2007-07" db="EMBL/GenBank/DDBJ databases">
        <authorList>
            <consortium name="NIH - Zebrafish Gene Collection (ZGC) project"/>
        </authorList>
    </citation>
    <scope>NUCLEOTIDE SEQUENCE [LARGE SCALE MRNA]</scope>
    <source>
        <tissue>Larva</tissue>
    </source>
</reference>
<name>T151B_DANRE</name>
<accession>A7E2I7</accession>
<proteinExistence type="evidence at transcript level"/>
<evidence type="ECO:0000255" key="1"/>
<evidence type="ECO:0000256" key="2">
    <source>
        <dbReference type="SAM" id="MobiDB-lite"/>
    </source>
</evidence>
<evidence type="ECO:0000305" key="3"/>
<sequence>MSPAAPVTESSAAEVHREQTDAPREPQRPLKQSLSKSLCRESHWKCLLLSLLMYCCVIAMTWCQVTKVTRLSFDSTFKVKSMIYHDSPCSNGYIYIPVAFLVMLYVVYLVECWQCYSRNELQFKVDLESVTERVQRMQQATPCIWWKAISYHYIRRTRQVTRYRNGDAYTSTQVYHERVNTHVAEAEFDYGNCGVKDIPKHLAGSDGFPVTKLRFTKCFSFANVESENSYLTQRARFFTENEGLDDYMEAREGMHLKNVEFKEYMVAFADPNRLPWYASTCSFWLAAAFTLSWPLRVLTEYRTAYLHYHVEKLFGFDYVSVTPLDHERPFCRHIPRVNTIDSTELEWHIRSNQQLVPSYSEAVLMNLTQQSSCNTFSARGIGAAGGNGFGGYRQNCERCHRSISSSSIFSRSALSICNSSNPRLAFSSSRFSLGRLYGSRRSCLWQSRSSSLNDPGCPTESTRCLANEESPPSPPAYQDALYFPVLIIHRNEGCIAHDHHSLHRNGSCVETSL</sequence>
<comment type="subcellular location">
    <subcellularLocation>
        <location evidence="3">Membrane</location>
        <topology evidence="3">Multi-pass membrane protein</topology>
    </subcellularLocation>
</comment>
<comment type="similarity">
    <text evidence="3">Belongs to the TMEM151 family.</text>
</comment>
<gene>
    <name type="primary">tmem151b</name>
    <name type="ORF">zgc:171639</name>
</gene>
<keyword id="KW-0325">Glycoprotein</keyword>
<keyword id="KW-0472">Membrane</keyword>
<keyword id="KW-1185">Reference proteome</keyword>
<keyword id="KW-0812">Transmembrane</keyword>
<keyword id="KW-1133">Transmembrane helix</keyword>
<dbReference type="EMBL" id="BC150366">
    <property type="protein sequence ID" value="AAI50367.1"/>
    <property type="molecule type" value="mRNA"/>
</dbReference>
<dbReference type="RefSeq" id="NP_001096614.1">
    <property type="nucleotide sequence ID" value="NM_001103144.1"/>
</dbReference>
<dbReference type="FunCoup" id="A7E2I7">
    <property type="interactions" value="145"/>
</dbReference>
<dbReference type="GlyCosmos" id="A7E2I7">
    <property type="glycosylation" value="3 sites, No reported glycans"/>
</dbReference>
<dbReference type="PaxDb" id="7955-ENSDARP00000078621"/>
<dbReference type="GeneID" id="100006371"/>
<dbReference type="KEGG" id="dre:100006371"/>
<dbReference type="AGR" id="ZFIN:ZDB-GENE-070820-12"/>
<dbReference type="CTD" id="100006371"/>
<dbReference type="ZFIN" id="ZDB-GENE-070820-12">
    <property type="gene designation" value="tmem151ba"/>
</dbReference>
<dbReference type="eggNOG" id="ENOG502QSYQ">
    <property type="taxonomic scope" value="Eukaryota"/>
</dbReference>
<dbReference type="InParanoid" id="A7E2I7"/>
<dbReference type="OrthoDB" id="190434at2759"/>
<dbReference type="PhylomeDB" id="A7E2I7"/>
<dbReference type="PRO" id="PR:A7E2I7"/>
<dbReference type="Proteomes" id="UP000000437">
    <property type="component" value="Chromosome 20"/>
</dbReference>
<dbReference type="GO" id="GO:0016020">
    <property type="term" value="C:membrane"/>
    <property type="evidence" value="ECO:0000318"/>
    <property type="project" value="GO_Central"/>
</dbReference>
<dbReference type="InterPro" id="IPR026767">
    <property type="entry name" value="Tmem151"/>
</dbReference>
<dbReference type="PANTHER" id="PTHR31893">
    <property type="entry name" value="TRANSMEMBRANE PROTEIN 151 HOMOLOG"/>
    <property type="match status" value="1"/>
</dbReference>
<dbReference type="PANTHER" id="PTHR31893:SF4">
    <property type="entry name" value="TRANSMEMBRANE PROTEIN 151B"/>
    <property type="match status" value="1"/>
</dbReference>
<dbReference type="Pfam" id="PF14857">
    <property type="entry name" value="TMEM151"/>
    <property type="match status" value="1"/>
</dbReference>
<organism>
    <name type="scientific">Danio rerio</name>
    <name type="common">Zebrafish</name>
    <name type="synonym">Brachydanio rerio</name>
    <dbReference type="NCBI Taxonomy" id="7955"/>
    <lineage>
        <taxon>Eukaryota</taxon>
        <taxon>Metazoa</taxon>
        <taxon>Chordata</taxon>
        <taxon>Craniata</taxon>
        <taxon>Vertebrata</taxon>
        <taxon>Euteleostomi</taxon>
        <taxon>Actinopterygii</taxon>
        <taxon>Neopterygii</taxon>
        <taxon>Teleostei</taxon>
        <taxon>Ostariophysi</taxon>
        <taxon>Cypriniformes</taxon>
        <taxon>Danionidae</taxon>
        <taxon>Danioninae</taxon>
        <taxon>Danio</taxon>
    </lineage>
</organism>
<feature type="chain" id="PRO_0000307222" description="Transmembrane protein 151B">
    <location>
        <begin position="1"/>
        <end position="513"/>
    </location>
</feature>
<feature type="transmembrane region" description="Helical" evidence="1">
    <location>
        <begin position="46"/>
        <end position="66"/>
    </location>
</feature>
<feature type="transmembrane region" description="Helical" evidence="1">
    <location>
        <begin position="93"/>
        <end position="113"/>
    </location>
</feature>
<feature type="transmembrane region" description="Helical" evidence="1">
    <location>
        <begin position="274"/>
        <end position="294"/>
    </location>
</feature>
<feature type="region of interest" description="Disordered" evidence="2">
    <location>
        <begin position="1"/>
        <end position="29"/>
    </location>
</feature>
<feature type="compositionally biased region" description="Basic and acidic residues" evidence="2">
    <location>
        <begin position="14"/>
        <end position="28"/>
    </location>
</feature>
<feature type="glycosylation site" description="N-linked (GlcNAc...) asparagine" evidence="1">
    <location>
        <position position="366"/>
    </location>
</feature>
<feature type="glycosylation site" description="N-linked (GlcNAc...) asparagine" evidence="1">
    <location>
        <position position="418"/>
    </location>
</feature>
<feature type="glycosylation site" description="N-linked (GlcNAc...) asparagine" evidence="1">
    <location>
        <position position="505"/>
    </location>
</feature>
<protein>
    <recommendedName>
        <fullName>Transmembrane protein 151B</fullName>
    </recommendedName>
</protein>